<keyword id="KW-0119">Carbohydrate metabolism</keyword>
<keyword id="KW-0378">Hydrolase</keyword>
<keyword id="KW-1185">Reference proteome</keyword>
<name>NAGB_BACAN</name>
<comment type="function">
    <text evidence="1">Catalyzes the reversible isomerization-deamination of glucosamine 6-phosphate (GlcN6P) to form fructose 6-phosphate (Fru6P) and ammonium ion.</text>
</comment>
<comment type="catalytic activity">
    <reaction evidence="1">
        <text>alpha-D-glucosamine 6-phosphate + H2O = beta-D-fructose 6-phosphate + NH4(+)</text>
        <dbReference type="Rhea" id="RHEA:12172"/>
        <dbReference type="ChEBI" id="CHEBI:15377"/>
        <dbReference type="ChEBI" id="CHEBI:28938"/>
        <dbReference type="ChEBI" id="CHEBI:57634"/>
        <dbReference type="ChEBI" id="CHEBI:75989"/>
        <dbReference type="EC" id="3.5.99.6"/>
    </reaction>
</comment>
<comment type="pathway">
    <text evidence="1">Amino-sugar metabolism; N-acetylneuraminate degradation; D-fructose 6-phosphate from N-acetylneuraminate: step 5/5.</text>
</comment>
<comment type="similarity">
    <text evidence="1">Belongs to the glucosamine/galactosamine-6-phosphate isomerase family. NagB subfamily.</text>
</comment>
<protein>
    <recommendedName>
        <fullName evidence="1">Glucosamine-6-phosphate deaminase</fullName>
        <ecNumber evidence="1">3.5.99.6</ecNumber>
    </recommendedName>
    <alternativeName>
        <fullName evidence="1">GlcN6P deaminase</fullName>
        <shortName evidence="1">GNPDA</shortName>
    </alternativeName>
    <alternativeName>
        <fullName evidence="1">Glucosamine-6-phosphate isomerase</fullName>
    </alternativeName>
</protein>
<feature type="chain" id="PRO_0000160129" description="Glucosamine-6-phosphate deaminase">
    <location>
        <begin position="1"/>
        <end position="262"/>
    </location>
</feature>
<feature type="active site" description="Proton acceptor; for enolization step" evidence="1">
    <location>
        <position position="63"/>
    </location>
</feature>
<feature type="active site" description="For ring-opening step" evidence="1">
    <location>
        <position position="129"/>
    </location>
</feature>
<feature type="active site" description="Proton acceptor; for ring-opening step" evidence="1">
    <location>
        <position position="131"/>
    </location>
</feature>
<feature type="active site" description="For ring-opening step" evidence="1">
    <location>
        <position position="136"/>
    </location>
</feature>
<gene>
    <name evidence="1" type="primary">nagB</name>
    <name type="ordered locus">BA_4273</name>
    <name type="ordered locus">GBAA_4273</name>
    <name type="ordered locus">BAS3964</name>
</gene>
<evidence type="ECO:0000255" key="1">
    <source>
        <dbReference type="HAMAP-Rule" id="MF_01241"/>
    </source>
</evidence>
<accession>Q81MH5</accession>
<accession>Q6HTX4</accession>
<accession>Q6KN56</accession>
<dbReference type="EC" id="3.5.99.6" evidence="1"/>
<dbReference type="EMBL" id="AE016879">
    <property type="protein sequence ID" value="AAP27993.1"/>
    <property type="molecule type" value="Genomic_DNA"/>
</dbReference>
<dbReference type="EMBL" id="AE017334">
    <property type="protein sequence ID" value="AAT33390.1"/>
    <property type="molecule type" value="Genomic_DNA"/>
</dbReference>
<dbReference type="EMBL" id="AE017225">
    <property type="protein sequence ID" value="AAT56265.1"/>
    <property type="molecule type" value="Genomic_DNA"/>
</dbReference>
<dbReference type="RefSeq" id="NP_846507.1">
    <property type="nucleotide sequence ID" value="NC_003997.3"/>
</dbReference>
<dbReference type="RefSeq" id="WP_001024206.1">
    <property type="nucleotide sequence ID" value="NZ_WXXJ01000027.1"/>
</dbReference>
<dbReference type="RefSeq" id="YP_030214.1">
    <property type="nucleotide sequence ID" value="NC_005945.1"/>
</dbReference>
<dbReference type="SMR" id="Q81MH5"/>
<dbReference type="IntAct" id="Q81MH5">
    <property type="interactions" value="1"/>
</dbReference>
<dbReference type="STRING" id="261594.GBAA_4273"/>
<dbReference type="DNASU" id="1088131"/>
<dbReference type="GeneID" id="75087199"/>
<dbReference type="KEGG" id="ban:BA_4273"/>
<dbReference type="KEGG" id="bar:GBAA_4273"/>
<dbReference type="KEGG" id="bat:BAS3964"/>
<dbReference type="PATRIC" id="fig|198094.11.peg.4243"/>
<dbReference type="eggNOG" id="COG0363">
    <property type="taxonomic scope" value="Bacteria"/>
</dbReference>
<dbReference type="HOGENOM" id="CLU_049611_1_0_9"/>
<dbReference type="OMA" id="HVITQGI"/>
<dbReference type="OrthoDB" id="9791139at2"/>
<dbReference type="UniPathway" id="UPA00629">
    <property type="reaction ID" value="UER00684"/>
</dbReference>
<dbReference type="Proteomes" id="UP000000427">
    <property type="component" value="Chromosome"/>
</dbReference>
<dbReference type="Proteomes" id="UP000000594">
    <property type="component" value="Chromosome"/>
</dbReference>
<dbReference type="GO" id="GO:0005737">
    <property type="term" value="C:cytoplasm"/>
    <property type="evidence" value="ECO:0007669"/>
    <property type="project" value="TreeGrafter"/>
</dbReference>
<dbReference type="GO" id="GO:0004342">
    <property type="term" value="F:glucosamine-6-phosphate deaminase activity"/>
    <property type="evidence" value="ECO:0007669"/>
    <property type="project" value="UniProtKB-UniRule"/>
</dbReference>
<dbReference type="GO" id="GO:0042802">
    <property type="term" value="F:identical protein binding"/>
    <property type="evidence" value="ECO:0007669"/>
    <property type="project" value="TreeGrafter"/>
</dbReference>
<dbReference type="GO" id="GO:0005975">
    <property type="term" value="P:carbohydrate metabolic process"/>
    <property type="evidence" value="ECO:0007669"/>
    <property type="project" value="InterPro"/>
</dbReference>
<dbReference type="GO" id="GO:0006043">
    <property type="term" value="P:glucosamine catabolic process"/>
    <property type="evidence" value="ECO:0007669"/>
    <property type="project" value="TreeGrafter"/>
</dbReference>
<dbReference type="GO" id="GO:0006046">
    <property type="term" value="P:N-acetylglucosamine catabolic process"/>
    <property type="evidence" value="ECO:0007669"/>
    <property type="project" value="TreeGrafter"/>
</dbReference>
<dbReference type="GO" id="GO:0019262">
    <property type="term" value="P:N-acetylneuraminate catabolic process"/>
    <property type="evidence" value="ECO:0007669"/>
    <property type="project" value="UniProtKB-UniRule"/>
</dbReference>
<dbReference type="CDD" id="cd01399">
    <property type="entry name" value="GlcN6P_deaminase"/>
    <property type="match status" value="1"/>
</dbReference>
<dbReference type="FunFam" id="3.40.50.1360:FF:000003">
    <property type="entry name" value="Glucosamine-6-phosphate deaminase"/>
    <property type="match status" value="1"/>
</dbReference>
<dbReference type="Gene3D" id="3.40.50.1360">
    <property type="match status" value="1"/>
</dbReference>
<dbReference type="HAMAP" id="MF_01241">
    <property type="entry name" value="GlcN6P_deamin"/>
    <property type="match status" value="1"/>
</dbReference>
<dbReference type="InterPro" id="IPR006148">
    <property type="entry name" value="Glc/Gal-6P_isomerase"/>
</dbReference>
<dbReference type="InterPro" id="IPR004547">
    <property type="entry name" value="Glucosamine6P_isomerase"/>
</dbReference>
<dbReference type="InterPro" id="IPR018321">
    <property type="entry name" value="Glucosamine6P_isomerase_CS"/>
</dbReference>
<dbReference type="InterPro" id="IPR037171">
    <property type="entry name" value="NagB/RpiA_transferase-like"/>
</dbReference>
<dbReference type="NCBIfam" id="TIGR00502">
    <property type="entry name" value="nagB"/>
    <property type="match status" value="1"/>
</dbReference>
<dbReference type="NCBIfam" id="NF001682">
    <property type="entry name" value="PRK00443.1-1"/>
    <property type="match status" value="1"/>
</dbReference>
<dbReference type="PANTHER" id="PTHR11280">
    <property type="entry name" value="GLUCOSAMINE-6-PHOSPHATE ISOMERASE"/>
    <property type="match status" value="1"/>
</dbReference>
<dbReference type="PANTHER" id="PTHR11280:SF5">
    <property type="entry name" value="GLUCOSAMINE-6-PHOSPHATE ISOMERASE"/>
    <property type="match status" value="1"/>
</dbReference>
<dbReference type="Pfam" id="PF01182">
    <property type="entry name" value="Glucosamine_iso"/>
    <property type="match status" value="1"/>
</dbReference>
<dbReference type="SUPFAM" id="SSF100950">
    <property type="entry name" value="NagB/RpiA/CoA transferase-like"/>
    <property type="match status" value="1"/>
</dbReference>
<dbReference type="PROSITE" id="PS01161">
    <property type="entry name" value="GLC_GALNAC_ISOMERASE"/>
    <property type="match status" value="1"/>
</dbReference>
<organism>
    <name type="scientific">Bacillus anthracis</name>
    <dbReference type="NCBI Taxonomy" id="1392"/>
    <lineage>
        <taxon>Bacteria</taxon>
        <taxon>Bacillati</taxon>
        <taxon>Bacillota</taxon>
        <taxon>Bacilli</taxon>
        <taxon>Bacillales</taxon>
        <taxon>Bacillaceae</taxon>
        <taxon>Bacillus</taxon>
        <taxon>Bacillus cereus group</taxon>
    </lineage>
</organism>
<proteinExistence type="inferred from homology"/>
<sequence length="262" mass="28971">MNILVVKTPEELAEAGYKLIEEVVKTKENPTLGMATGSSPLGIYAEMRKNKLDTSRVTTVNLDEYVNLPHEDKNSYHYFMQEQLFDHLPFKQTYVPNGMASDLEEECKRYEGILAANPVDLQILGIGENGHIGFNEPGTPFNSPTNIVELTESTRQANLRFFEKEEDVPTHAITMGIGSIMKAKQILLVAMGSKKAEAVKELLQGAYSEACPATVLQRHPNVTVIADQEALSLCSEAIADEHRQVFTISDLLSDSRVGETAN</sequence>
<reference key="1">
    <citation type="journal article" date="2003" name="Nature">
        <title>The genome sequence of Bacillus anthracis Ames and comparison to closely related bacteria.</title>
        <authorList>
            <person name="Read T.D."/>
            <person name="Peterson S.N."/>
            <person name="Tourasse N.J."/>
            <person name="Baillie L.W."/>
            <person name="Paulsen I.T."/>
            <person name="Nelson K.E."/>
            <person name="Tettelin H."/>
            <person name="Fouts D.E."/>
            <person name="Eisen J.A."/>
            <person name="Gill S.R."/>
            <person name="Holtzapple E.K."/>
            <person name="Okstad O.A."/>
            <person name="Helgason E."/>
            <person name="Rilstone J."/>
            <person name="Wu M."/>
            <person name="Kolonay J.F."/>
            <person name="Beanan M.J."/>
            <person name="Dodson R.J."/>
            <person name="Brinkac L.M."/>
            <person name="Gwinn M.L."/>
            <person name="DeBoy R.T."/>
            <person name="Madpu R."/>
            <person name="Daugherty S.C."/>
            <person name="Durkin A.S."/>
            <person name="Haft D.H."/>
            <person name="Nelson W.C."/>
            <person name="Peterson J.D."/>
            <person name="Pop M."/>
            <person name="Khouri H.M."/>
            <person name="Radune D."/>
            <person name="Benton J.L."/>
            <person name="Mahamoud Y."/>
            <person name="Jiang L."/>
            <person name="Hance I.R."/>
            <person name="Weidman J.F."/>
            <person name="Berry K.J."/>
            <person name="Plaut R.D."/>
            <person name="Wolf A.M."/>
            <person name="Watkins K.L."/>
            <person name="Nierman W.C."/>
            <person name="Hazen A."/>
            <person name="Cline R.T."/>
            <person name="Redmond C."/>
            <person name="Thwaite J.E."/>
            <person name="White O."/>
            <person name="Salzberg S.L."/>
            <person name="Thomason B."/>
            <person name="Friedlander A.M."/>
            <person name="Koehler T.M."/>
            <person name="Hanna P.C."/>
            <person name="Kolstoe A.-B."/>
            <person name="Fraser C.M."/>
        </authorList>
    </citation>
    <scope>NUCLEOTIDE SEQUENCE [LARGE SCALE GENOMIC DNA]</scope>
    <source>
        <strain>Ames / isolate Porton</strain>
    </source>
</reference>
<reference key="2">
    <citation type="journal article" date="2009" name="J. Bacteriol.">
        <title>The complete genome sequence of Bacillus anthracis Ames 'Ancestor'.</title>
        <authorList>
            <person name="Ravel J."/>
            <person name="Jiang L."/>
            <person name="Stanley S.T."/>
            <person name="Wilson M.R."/>
            <person name="Decker R.S."/>
            <person name="Read T.D."/>
            <person name="Worsham P."/>
            <person name="Keim P.S."/>
            <person name="Salzberg S.L."/>
            <person name="Fraser-Liggett C.M."/>
            <person name="Rasko D.A."/>
        </authorList>
    </citation>
    <scope>NUCLEOTIDE SEQUENCE [LARGE SCALE GENOMIC DNA]</scope>
    <source>
        <strain>Ames ancestor</strain>
    </source>
</reference>
<reference key="3">
    <citation type="submission" date="2004-01" db="EMBL/GenBank/DDBJ databases">
        <title>Complete genome sequence of Bacillus anthracis Sterne.</title>
        <authorList>
            <person name="Brettin T.S."/>
            <person name="Bruce D."/>
            <person name="Challacombe J.F."/>
            <person name="Gilna P."/>
            <person name="Han C."/>
            <person name="Hill K."/>
            <person name="Hitchcock P."/>
            <person name="Jackson P."/>
            <person name="Keim P."/>
            <person name="Longmire J."/>
            <person name="Lucas S."/>
            <person name="Okinaka R."/>
            <person name="Richardson P."/>
            <person name="Rubin E."/>
            <person name="Tice H."/>
        </authorList>
    </citation>
    <scope>NUCLEOTIDE SEQUENCE [LARGE SCALE GENOMIC DNA]</scope>
    <source>
        <strain>Sterne</strain>
    </source>
</reference>